<reference key="1">
    <citation type="journal article" date="2007" name="Genes Dev.">
        <title>New insights into Acinetobacter baumannii pathogenesis revealed by high-density pyrosequencing and transposon mutagenesis.</title>
        <authorList>
            <person name="Smith M.G."/>
            <person name="Gianoulis T.A."/>
            <person name="Pukatzki S."/>
            <person name="Mekalanos J.J."/>
            <person name="Ornston L.N."/>
            <person name="Gerstein M."/>
            <person name="Snyder M."/>
        </authorList>
    </citation>
    <scope>NUCLEOTIDE SEQUENCE [LARGE SCALE GENOMIC DNA]</scope>
    <source>
        <strain>ATCC 17978 / DSM 105126 / CIP 53.77 / LMG 1025 / NCDC KC755 / 5377</strain>
    </source>
</reference>
<protein>
    <recommendedName>
        <fullName evidence="1">Imidazolonepropionase</fullName>
        <ecNumber evidence="1">3.5.2.7</ecNumber>
    </recommendedName>
    <alternativeName>
        <fullName evidence="1">Imidazolone-5-propionate hydrolase</fullName>
    </alternativeName>
</protein>
<organism>
    <name type="scientific">Acinetobacter baumannii (strain ATCC 17978 / DSM 105126 / CIP 53.77 / LMG 1025 / NCDC KC755 / 5377)</name>
    <dbReference type="NCBI Taxonomy" id="400667"/>
    <lineage>
        <taxon>Bacteria</taxon>
        <taxon>Pseudomonadati</taxon>
        <taxon>Pseudomonadota</taxon>
        <taxon>Gammaproteobacteria</taxon>
        <taxon>Moraxellales</taxon>
        <taxon>Moraxellaceae</taxon>
        <taxon>Acinetobacter</taxon>
        <taxon>Acinetobacter calcoaceticus/baumannii complex</taxon>
    </lineage>
</organism>
<accession>A3MA48</accession>
<dbReference type="EC" id="3.5.2.7" evidence="1"/>
<dbReference type="EMBL" id="CP000521">
    <property type="protein sequence ID" value="ABO13792.2"/>
    <property type="molecule type" value="Genomic_DNA"/>
</dbReference>
<dbReference type="RefSeq" id="WP_000737795.1">
    <property type="nucleotide sequence ID" value="NZ_CP053098.1"/>
</dbReference>
<dbReference type="SMR" id="A3MA48"/>
<dbReference type="KEGG" id="acb:A1S_3403"/>
<dbReference type="HOGENOM" id="CLU_041647_0_0_6"/>
<dbReference type="UniPathway" id="UPA00379">
    <property type="reaction ID" value="UER00551"/>
</dbReference>
<dbReference type="GO" id="GO:0005737">
    <property type="term" value="C:cytoplasm"/>
    <property type="evidence" value="ECO:0007669"/>
    <property type="project" value="UniProtKB-SubCell"/>
</dbReference>
<dbReference type="GO" id="GO:0050480">
    <property type="term" value="F:imidazolonepropionase activity"/>
    <property type="evidence" value="ECO:0007669"/>
    <property type="project" value="UniProtKB-UniRule"/>
</dbReference>
<dbReference type="GO" id="GO:0005506">
    <property type="term" value="F:iron ion binding"/>
    <property type="evidence" value="ECO:0007669"/>
    <property type="project" value="UniProtKB-UniRule"/>
</dbReference>
<dbReference type="GO" id="GO:0008270">
    <property type="term" value="F:zinc ion binding"/>
    <property type="evidence" value="ECO:0007669"/>
    <property type="project" value="UniProtKB-UniRule"/>
</dbReference>
<dbReference type="GO" id="GO:0019556">
    <property type="term" value="P:L-histidine catabolic process to glutamate and formamide"/>
    <property type="evidence" value="ECO:0007669"/>
    <property type="project" value="UniProtKB-UniPathway"/>
</dbReference>
<dbReference type="GO" id="GO:0019557">
    <property type="term" value="P:L-histidine catabolic process to glutamate and formate"/>
    <property type="evidence" value="ECO:0007669"/>
    <property type="project" value="UniProtKB-UniPathway"/>
</dbReference>
<dbReference type="CDD" id="cd01296">
    <property type="entry name" value="Imidazolone-5PH"/>
    <property type="match status" value="1"/>
</dbReference>
<dbReference type="FunFam" id="3.20.20.140:FF:000007">
    <property type="entry name" value="Imidazolonepropionase"/>
    <property type="match status" value="1"/>
</dbReference>
<dbReference type="Gene3D" id="3.20.20.140">
    <property type="entry name" value="Metal-dependent hydrolases"/>
    <property type="match status" value="1"/>
</dbReference>
<dbReference type="Gene3D" id="2.30.40.10">
    <property type="entry name" value="Urease, subunit C, domain 1"/>
    <property type="match status" value="1"/>
</dbReference>
<dbReference type="HAMAP" id="MF_00372">
    <property type="entry name" value="HutI"/>
    <property type="match status" value="1"/>
</dbReference>
<dbReference type="InterPro" id="IPR006680">
    <property type="entry name" value="Amidohydro-rel"/>
</dbReference>
<dbReference type="InterPro" id="IPR005920">
    <property type="entry name" value="HutI"/>
</dbReference>
<dbReference type="InterPro" id="IPR011059">
    <property type="entry name" value="Metal-dep_hydrolase_composite"/>
</dbReference>
<dbReference type="InterPro" id="IPR032466">
    <property type="entry name" value="Metal_Hydrolase"/>
</dbReference>
<dbReference type="NCBIfam" id="TIGR01224">
    <property type="entry name" value="hutI"/>
    <property type="match status" value="1"/>
</dbReference>
<dbReference type="PANTHER" id="PTHR42752">
    <property type="entry name" value="IMIDAZOLONEPROPIONASE"/>
    <property type="match status" value="1"/>
</dbReference>
<dbReference type="PANTHER" id="PTHR42752:SF1">
    <property type="entry name" value="IMIDAZOLONEPROPIONASE-RELATED"/>
    <property type="match status" value="1"/>
</dbReference>
<dbReference type="Pfam" id="PF01979">
    <property type="entry name" value="Amidohydro_1"/>
    <property type="match status" value="1"/>
</dbReference>
<dbReference type="SUPFAM" id="SSF51338">
    <property type="entry name" value="Composite domain of metallo-dependent hydrolases"/>
    <property type="match status" value="1"/>
</dbReference>
<dbReference type="SUPFAM" id="SSF51556">
    <property type="entry name" value="Metallo-dependent hydrolases"/>
    <property type="match status" value="1"/>
</dbReference>
<feature type="chain" id="PRO_0000306421" description="Imidazolonepropionase">
    <location>
        <begin position="1"/>
        <end position="401"/>
    </location>
</feature>
<feature type="binding site" evidence="1">
    <location>
        <position position="66"/>
    </location>
    <ligand>
        <name>Fe(3+)</name>
        <dbReference type="ChEBI" id="CHEBI:29034"/>
    </ligand>
</feature>
<feature type="binding site" evidence="1">
    <location>
        <position position="66"/>
    </location>
    <ligand>
        <name>Zn(2+)</name>
        <dbReference type="ChEBI" id="CHEBI:29105"/>
    </ligand>
</feature>
<feature type="binding site" evidence="1">
    <location>
        <position position="68"/>
    </location>
    <ligand>
        <name>Fe(3+)</name>
        <dbReference type="ChEBI" id="CHEBI:29034"/>
    </ligand>
</feature>
<feature type="binding site" evidence="1">
    <location>
        <position position="68"/>
    </location>
    <ligand>
        <name>Zn(2+)</name>
        <dbReference type="ChEBI" id="CHEBI:29105"/>
    </ligand>
</feature>
<feature type="binding site" evidence="1">
    <location>
        <position position="75"/>
    </location>
    <ligand>
        <name>4-imidazolone-5-propanoate</name>
        <dbReference type="ChEBI" id="CHEBI:77893"/>
    </ligand>
</feature>
<feature type="binding site" evidence="1">
    <location>
        <position position="138"/>
    </location>
    <ligand>
        <name>4-imidazolone-5-propanoate</name>
        <dbReference type="ChEBI" id="CHEBI:77893"/>
    </ligand>
</feature>
<feature type="binding site" evidence="1">
    <location>
        <position position="138"/>
    </location>
    <ligand>
        <name>N-formimidoyl-L-glutamate</name>
        <dbReference type="ChEBI" id="CHEBI:58928"/>
    </ligand>
</feature>
<feature type="binding site" evidence="1">
    <location>
        <position position="171"/>
    </location>
    <ligand>
        <name>4-imidazolone-5-propanoate</name>
        <dbReference type="ChEBI" id="CHEBI:77893"/>
    </ligand>
</feature>
<feature type="binding site" evidence="1">
    <location>
        <position position="236"/>
    </location>
    <ligand>
        <name>Fe(3+)</name>
        <dbReference type="ChEBI" id="CHEBI:29034"/>
    </ligand>
</feature>
<feature type="binding site" evidence="1">
    <location>
        <position position="236"/>
    </location>
    <ligand>
        <name>Zn(2+)</name>
        <dbReference type="ChEBI" id="CHEBI:29105"/>
    </ligand>
</feature>
<feature type="binding site" evidence="1">
    <location>
        <position position="239"/>
    </location>
    <ligand>
        <name>4-imidazolone-5-propanoate</name>
        <dbReference type="ChEBI" id="CHEBI:77893"/>
    </ligand>
</feature>
<feature type="binding site" evidence="1">
    <location>
        <position position="311"/>
    </location>
    <ligand>
        <name>Fe(3+)</name>
        <dbReference type="ChEBI" id="CHEBI:29034"/>
    </ligand>
</feature>
<feature type="binding site" evidence="1">
    <location>
        <position position="311"/>
    </location>
    <ligand>
        <name>Zn(2+)</name>
        <dbReference type="ChEBI" id="CHEBI:29105"/>
    </ligand>
</feature>
<feature type="binding site" evidence="1">
    <location>
        <position position="313"/>
    </location>
    <ligand>
        <name>N-formimidoyl-L-glutamate</name>
        <dbReference type="ChEBI" id="CHEBI:58928"/>
    </ligand>
</feature>
<feature type="binding site" evidence="1">
    <location>
        <position position="315"/>
    </location>
    <ligand>
        <name>N-formimidoyl-L-glutamate</name>
        <dbReference type="ChEBI" id="CHEBI:58928"/>
    </ligand>
</feature>
<feature type="binding site" evidence="1">
    <location>
        <position position="316"/>
    </location>
    <ligand>
        <name>4-imidazolone-5-propanoate</name>
        <dbReference type="ChEBI" id="CHEBI:77893"/>
    </ligand>
</feature>
<name>HUTI_ACIBT</name>
<keyword id="KW-0963">Cytoplasm</keyword>
<keyword id="KW-0369">Histidine metabolism</keyword>
<keyword id="KW-0378">Hydrolase</keyword>
<keyword id="KW-0408">Iron</keyword>
<keyword id="KW-0479">Metal-binding</keyword>
<keyword id="KW-0862">Zinc</keyword>
<evidence type="ECO:0000255" key="1">
    <source>
        <dbReference type="HAMAP-Rule" id="MF_00372"/>
    </source>
</evidence>
<gene>
    <name evidence="1" type="primary">hutI</name>
    <name type="ordered locus">A1S_3403</name>
</gene>
<sequence>MKKLWQNCHIATMQNGQYSYIEDAAIVTEGHLIHWIGKQQQLPADTYSETVDLNGAWVTPGFIDCHTHSVFGGNRSVEFEKRLQGVSYAEIAASGGGIASTVRATREASEEQLLNSALKRIRCMQQDGVTTIEIKSGYGLNYENERKMLRVIRQIGEKLPMTVKSTCLAAHALPPEYKDQSDAYIEHICTEMLPKLHAEGLVDAVDAFCEHLAFSPAQVERVFKTAQSLNLPVKLHAEQLSSLGGSSLAARYHALSADHLEYMTEDDVKAMAASGTVAVLLPGAFYLLRETQYPPIESLIKHGVRIALSSDLNPGTSPALSLRLMLNMGSTLFRLTPEQALAGVTIHAAQALGLEQTHGSLEQGKVADFVAWDIEHPSEIVYWLGGDLPKRVVQHGQEVIF</sequence>
<comment type="function">
    <text evidence="1">Catalyzes the hydrolytic cleavage of the carbon-nitrogen bond in imidazolone-5-propanoate to yield N-formimidoyl-L-glutamate. It is the third step in the universal histidine degradation pathway.</text>
</comment>
<comment type="catalytic activity">
    <reaction evidence="1">
        <text>4-imidazolone-5-propanoate + H2O = N-formimidoyl-L-glutamate</text>
        <dbReference type="Rhea" id="RHEA:23660"/>
        <dbReference type="ChEBI" id="CHEBI:15377"/>
        <dbReference type="ChEBI" id="CHEBI:58928"/>
        <dbReference type="ChEBI" id="CHEBI:77893"/>
        <dbReference type="EC" id="3.5.2.7"/>
    </reaction>
</comment>
<comment type="cofactor">
    <cofactor evidence="1">
        <name>Zn(2+)</name>
        <dbReference type="ChEBI" id="CHEBI:29105"/>
    </cofactor>
    <cofactor evidence="1">
        <name>Fe(3+)</name>
        <dbReference type="ChEBI" id="CHEBI:29034"/>
    </cofactor>
    <text evidence="1">Binds 1 zinc or iron ion per subunit.</text>
</comment>
<comment type="pathway">
    <text evidence="1">Amino-acid degradation; L-histidine degradation into L-glutamate; N-formimidoyl-L-glutamate from L-histidine: step 3/3.</text>
</comment>
<comment type="subcellular location">
    <subcellularLocation>
        <location evidence="1">Cytoplasm</location>
    </subcellularLocation>
</comment>
<comment type="similarity">
    <text evidence="1">Belongs to the metallo-dependent hydrolases superfamily. HutI family.</text>
</comment>
<proteinExistence type="inferred from homology"/>